<comment type="cofactor">
    <cofactor evidence="1">
        <name>heme</name>
        <dbReference type="ChEBI" id="CHEBI:30413"/>
    </cofactor>
</comment>
<comment type="subcellular location">
    <subcellularLocation>
        <location evidence="4">Membrane</location>
        <topology evidence="4">Single-pass membrane protein</topology>
    </subcellularLocation>
</comment>
<comment type="similarity">
    <text evidence="4">Belongs to the cytochrome P450 family.</text>
</comment>
<protein>
    <recommendedName>
        <fullName>Probable cytochrome P450 519D1</fullName>
        <ecNumber>1.14.-.-</ecNumber>
    </recommendedName>
</protein>
<organism>
    <name type="scientific">Dictyostelium discoideum</name>
    <name type="common">Social amoeba</name>
    <dbReference type="NCBI Taxonomy" id="44689"/>
    <lineage>
        <taxon>Eukaryota</taxon>
        <taxon>Amoebozoa</taxon>
        <taxon>Evosea</taxon>
        <taxon>Eumycetozoa</taxon>
        <taxon>Dictyostelia</taxon>
        <taxon>Dictyosteliales</taxon>
        <taxon>Dictyosteliaceae</taxon>
        <taxon>Dictyostelium</taxon>
    </lineage>
</organism>
<evidence type="ECO:0000250" key="1"/>
<evidence type="ECO:0000255" key="2"/>
<evidence type="ECO:0000256" key="3">
    <source>
        <dbReference type="SAM" id="MobiDB-lite"/>
    </source>
</evidence>
<evidence type="ECO:0000305" key="4"/>
<sequence>MNVFVLTFFICIIYLLFDLIKKNKKLKDEPPTPKLALPLIGHLYLLGDRPNRSFLELSKRYGGIFKIWMGEYPTVVLTDPDHVNEVWCKQFLNFTNRPHFNSLDQFSSGFRNLSFSDYPLWSELRKLVSSSFTKSKVKGISNLLETQTNYLINTMNNYSINNKPFNPKKYIHKLTLNVVCMIAFSKEIKNDEDVNEGDMARLTKPKEMILKHLGSSNFCDFVPLVRPLFYLKNKRFDQTLKQVREYIKEIYDDHLLNLDLNSPPKDIMDLLIMSTNDSKEDIIIQTCIDFLIAGSDTVGVTIEWFLVYISNNPIIQEKCFNELFNAFSNSNNTDNNNNNSTITTAIGFGDEYSSKTPFLNACIKEVLRIKPVTSLGLPRIANDDTFVNGYRIPKGTQIIENIYGLSNSDQLIDDPTTFNPYRWLEYQKLKSFQNDLKQQQQQQQQQQQQQQQLQLQQEQQEQEQQKINLEFNNNNNNNNNNNNNNSNNKHKYYNDLDKISIPFSTGRRGCVGVQLGEAELYIVCANLVYNFKIESWDGKKINELEDFGIIIHPSSHNLKITKRNNK</sequence>
<reference key="1">
    <citation type="journal article" date="2005" name="Nature">
        <title>The genome of the social amoeba Dictyostelium discoideum.</title>
        <authorList>
            <person name="Eichinger L."/>
            <person name="Pachebat J.A."/>
            <person name="Gloeckner G."/>
            <person name="Rajandream M.A."/>
            <person name="Sucgang R."/>
            <person name="Berriman M."/>
            <person name="Song J."/>
            <person name="Olsen R."/>
            <person name="Szafranski K."/>
            <person name="Xu Q."/>
            <person name="Tunggal B."/>
            <person name="Kummerfeld S."/>
            <person name="Madera M."/>
            <person name="Konfortov B.A."/>
            <person name="Rivero F."/>
            <person name="Bankier A.T."/>
            <person name="Lehmann R."/>
            <person name="Hamlin N."/>
            <person name="Davies R."/>
            <person name="Gaudet P."/>
            <person name="Fey P."/>
            <person name="Pilcher K."/>
            <person name="Chen G."/>
            <person name="Saunders D."/>
            <person name="Sodergren E.J."/>
            <person name="Davis P."/>
            <person name="Kerhornou A."/>
            <person name="Nie X."/>
            <person name="Hall N."/>
            <person name="Anjard C."/>
            <person name="Hemphill L."/>
            <person name="Bason N."/>
            <person name="Farbrother P."/>
            <person name="Desany B."/>
            <person name="Just E."/>
            <person name="Morio T."/>
            <person name="Rost R."/>
            <person name="Churcher C.M."/>
            <person name="Cooper J."/>
            <person name="Haydock S."/>
            <person name="van Driessche N."/>
            <person name="Cronin A."/>
            <person name="Goodhead I."/>
            <person name="Muzny D.M."/>
            <person name="Mourier T."/>
            <person name="Pain A."/>
            <person name="Lu M."/>
            <person name="Harper D."/>
            <person name="Lindsay R."/>
            <person name="Hauser H."/>
            <person name="James K.D."/>
            <person name="Quiles M."/>
            <person name="Madan Babu M."/>
            <person name="Saito T."/>
            <person name="Buchrieser C."/>
            <person name="Wardroper A."/>
            <person name="Felder M."/>
            <person name="Thangavelu M."/>
            <person name="Johnson D."/>
            <person name="Knights A."/>
            <person name="Loulseged H."/>
            <person name="Mungall K.L."/>
            <person name="Oliver K."/>
            <person name="Price C."/>
            <person name="Quail M.A."/>
            <person name="Urushihara H."/>
            <person name="Hernandez J."/>
            <person name="Rabbinowitsch E."/>
            <person name="Steffen D."/>
            <person name="Sanders M."/>
            <person name="Ma J."/>
            <person name="Kohara Y."/>
            <person name="Sharp S."/>
            <person name="Simmonds M.N."/>
            <person name="Spiegler S."/>
            <person name="Tivey A."/>
            <person name="Sugano S."/>
            <person name="White B."/>
            <person name="Walker D."/>
            <person name="Woodward J.R."/>
            <person name="Winckler T."/>
            <person name="Tanaka Y."/>
            <person name="Shaulsky G."/>
            <person name="Schleicher M."/>
            <person name="Weinstock G.M."/>
            <person name="Rosenthal A."/>
            <person name="Cox E.C."/>
            <person name="Chisholm R.L."/>
            <person name="Gibbs R.A."/>
            <person name="Loomis W.F."/>
            <person name="Platzer M."/>
            <person name="Kay R.R."/>
            <person name="Williams J.G."/>
            <person name="Dear P.H."/>
            <person name="Noegel A.A."/>
            <person name="Barrell B.G."/>
            <person name="Kuspa A."/>
        </authorList>
    </citation>
    <scope>NUCLEOTIDE SEQUENCE [LARGE SCALE GENOMIC DNA]</scope>
    <source>
        <strain>AX4</strain>
    </source>
</reference>
<gene>
    <name type="primary">cyp519D1</name>
    <name type="ORF">DDB_G0291448</name>
</gene>
<dbReference type="EC" id="1.14.-.-"/>
<dbReference type="EMBL" id="AAFI02000177">
    <property type="protein sequence ID" value="EAL61708.1"/>
    <property type="molecule type" value="Genomic_DNA"/>
</dbReference>
<dbReference type="RefSeq" id="XP_635215.1">
    <property type="nucleotide sequence ID" value="XM_630123.1"/>
</dbReference>
<dbReference type="SMR" id="Q54EM5"/>
<dbReference type="FunCoup" id="Q54EM5">
    <property type="interactions" value="1"/>
</dbReference>
<dbReference type="STRING" id="44689.Q54EM5"/>
<dbReference type="PaxDb" id="44689-DDB0233025"/>
<dbReference type="EnsemblProtists" id="EAL61708">
    <property type="protein sequence ID" value="EAL61708"/>
    <property type="gene ID" value="DDB_G0291448"/>
</dbReference>
<dbReference type="GeneID" id="8628162"/>
<dbReference type="KEGG" id="ddi:DDB_G0291448"/>
<dbReference type="dictyBase" id="DDB_G0291448">
    <property type="gene designation" value="cyp519D1"/>
</dbReference>
<dbReference type="VEuPathDB" id="AmoebaDB:DDB_G0291448"/>
<dbReference type="eggNOG" id="KOG0156">
    <property type="taxonomic scope" value="Eukaryota"/>
</dbReference>
<dbReference type="HOGENOM" id="CLU_001570_4_0_1"/>
<dbReference type="InParanoid" id="Q54EM5"/>
<dbReference type="OMA" id="AKWEIFL"/>
<dbReference type="PhylomeDB" id="Q54EM5"/>
<dbReference type="Reactome" id="R-DDI-211935">
    <property type="pathway name" value="Fatty acids"/>
</dbReference>
<dbReference type="Reactome" id="R-DDI-211945">
    <property type="pathway name" value="Phase I - Functionalization of compounds"/>
</dbReference>
<dbReference type="Reactome" id="R-DDI-211958">
    <property type="pathway name" value="Miscellaneous substrates"/>
</dbReference>
<dbReference type="Reactome" id="R-DDI-211981">
    <property type="pathway name" value="Xenobiotics"/>
</dbReference>
<dbReference type="Reactome" id="R-DDI-211999">
    <property type="pathway name" value="CYP2E1 reactions"/>
</dbReference>
<dbReference type="Reactome" id="R-DDI-2142670">
    <property type="pathway name" value="Synthesis of epoxy (EET) and dihydroxyeicosatrienoic acids (DHET)"/>
</dbReference>
<dbReference type="Reactome" id="R-DDI-2142816">
    <property type="pathway name" value="Synthesis of (16-20)-hydroxyeicosatetraenoic acids (HETE)"/>
</dbReference>
<dbReference type="Reactome" id="R-DDI-5423646">
    <property type="pathway name" value="Aflatoxin activation and detoxification"/>
</dbReference>
<dbReference type="Reactome" id="R-DDI-9027307">
    <property type="pathway name" value="Biosynthesis of maresin-like SPMs"/>
</dbReference>
<dbReference type="Reactome" id="R-DDI-9749641">
    <property type="pathway name" value="Aspirin ADME"/>
</dbReference>
<dbReference type="Reactome" id="R-DDI-9753281">
    <property type="pathway name" value="Paracetamol ADME"/>
</dbReference>
<dbReference type="PRO" id="PR:Q54EM5"/>
<dbReference type="Proteomes" id="UP000002195">
    <property type="component" value="Chromosome 6"/>
</dbReference>
<dbReference type="GO" id="GO:0016020">
    <property type="term" value="C:membrane"/>
    <property type="evidence" value="ECO:0007669"/>
    <property type="project" value="UniProtKB-SubCell"/>
</dbReference>
<dbReference type="GO" id="GO:0020037">
    <property type="term" value="F:heme binding"/>
    <property type="evidence" value="ECO:0007669"/>
    <property type="project" value="InterPro"/>
</dbReference>
<dbReference type="GO" id="GO:0005506">
    <property type="term" value="F:iron ion binding"/>
    <property type="evidence" value="ECO:0007669"/>
    <property type="project" value="InterPro"/>
</dbReference>
<dbReference type="GO" id="GO:0004497">
    <property type="term" value="F:monooxygenase activity"/>
    <property type="evidence" value="ECO:0007669"/>
    <property type="project" value="UniProtKB-KW"/>
</dbReference>
<dbReference type="GO" id="GO:0016705">
    <property type="term" value="F:oxidoreductase activity, acting on paired donors, with incorporation or reduction of molecular oxygen"/>
    <property type="evidence" value="ECO:0007669"/>
    <property type="project" value="InterPro"/>
</dbReference>
<dbReference type="CDD" id="cd20617">
    <property type="entry name" value="CYP1_2-like"/>
    <property type="match status" value="1"/>
</dbReference>
<dbReference type="Gene3D" id="1.10.630.10">
    <property type="entry name" value="Cytochrome P450"/>
    <property type="match status" value="1"/>
</dbReference>
<dbReference type="InterPro" id="IPR001128">
    <property type="entry name" value="Cyt_P450"/>
</dbReference>
<dbReference type="InterPro" id="IPR017972">
    <property type="entry name" value="Cyt_P450_CS"/>
</dbReference>
<dbReference type="InterPro" id="IPR002401">
    <property type="entry name" value="Cyt_P450_E_grp-I"/>
</dbReference>
<dbReference type="InterPro" id="IPR036396">
    <property type="entry name" value="Cyt_P450_sf"/>
</dbReference>
<dbReference type="PANTHER" id="PTHR24303:SF31">
    <property type="entry name" value="CYTOCHROME P450 307A1-RELATED"/>
    <property type="match status" value="1"/>
</dbReference>
<dbReference type="PANTHER" id="PTHR24303">
    <property type="entry name" value="HEME-BINDING MONOOXYGENASE FAMILY"/>
    <property type="match status" value="1"/>
</dbReference>
<dbReference type="Pfam" id="PF00067">
    <property type="entry name" value="p450"/>
    <property type="match status" value="2"/>
</dbReference>
<dbReference type="PRINTS" id="PR00463">
    <property type="entry name" value="EP450I"/>
</dbReference>
<dbReference type="PRINTS" id="PR00385">
    <property type="entry name" value="P450"/>
</dbReference>
<dbReference type="SUPFAM" id="SSF48264">
    <property type="entry name" value="Cytochrome P450"/>
    <property type="match status" value="1"/>
</dbReference>
<dbReference type="PROSITE" id="PS00086">
    <property type="entry name" value="CYTOCHROME_P450"/>
    <property type="match status" value="1"/>
</dbReference>
<accession>Q54EM5</accession>
<feature type="chain" id="PRO_0000318835" description="Probable cytochrome P450 519D1">
    <location>
        <begin position="1"/>
        <end position="566"/>
    </location>
</feature>
<feature type="transmembrane region" description="Helical" evidence="2">
    <location>
        <begin position="1"/>
        <end position="21"/>
    </location>
</feature>
<feature type="region of interest" description="Disordered" evidence="3">
    <location>
        <begin position="471"/>
        <end position="491"/>
    </location>
</feature>
<feature type="compositionally biased region" description="Low complexity" evidence="3">
    <location>
        <begin position="472"/>
        <end position="487"/>
    </location>
</feature>
<feature type="binding site" description="axial binding residue" evidence="1">
    <location>
        <position position="510"/>
    </location>
    <ligand>
        <name>heme</name>
        <dbReference type="ChEBI" id="CHEBI:30413"/>
    </ligand>
    <ligandPart>
        <name>Fe</name>
        <dbReference type="ChEBI" id="CHEBI:18248"/>
    </ligandPart>
</feature>
<name>C519D_DICDI</name>
<proteinExistence type="inferred from homology"/>
<keyword id="KW-0349">Heme</keyword>
<keyword id="KW-0408">Iron</keyword>
<keyword id="KW-0472">Membrane</keyword>
<keyword id="KW-0479">Metal-binding</keyword>
<keyword id="KW-0503">Monooxygenase</keyword>
<keyword id="KW-0560">Oxidoreductase</keyword>
<keyword id="KW-1185">Reference proteome</keyword>
<keyword id="KW-0812">Transmembrane</keyword>
<keyword id="KW-1133">Transmembrane helix</keyword>